<sequence>MQEELKRLEKEAVEKVEAAGSLKEVNDVRVAYLGKKGPITEVLRGMGKLSAEERPKMGALANEVREKIAAAIAEKNARLEEEEVKRKLKEQTIDVTLPGSPVKTGARHPLTIVIEEIEDLFISMGYSVEEGPEVETDYYNFEALNLPKEHPARDMQDSFYITEDTLMRTQTSPVQTRTMEKHKGKGPVKIICPGKVYRRDNDDATHSHQFMQIEGLCVDRDISMSDLKGTLETVAKKMFGEEREIRLRPSFFPFTEPSVEVDVSCFKCGGKGCSVCKQTGWIEILGAGMVHPNVLEMAGFDSKQYQGFAFGMGVERIAMLKYGIDDIRHFYTNDVRFLSQFKQA</sequence>
<dbReference type="EC" id="6.1.1.20" evidence="1"/>
<dbReference type="EMBL" id="CP000002">
    <property type="protein sequence ID" value="AAU24524.1"/>
    <property type="molecule type" value="Genomic_DNA"/>
</dbReference>
<dbReference type="EMBL" id="AE017333">
    <property type="protein sequence ID" value="AAU41882.1"/>
    <property type="molecule type" value="Genomic_DNA"/>
</dbReference>
<dbReference type="RefSeq" id="WP_003184229.1">
    <property type="nucleotide sequence ID" value="NC_006322.1"/>
</dbReference>
<dbReference type="SMR" id="Q65GD2"/>
<dbReference type="STRING" id="279010.BL00340"/>
<dbReference type="GeneID" id="92860390"/>
<dbReference type="KEGG" id="bld:BLi03016"/>
<dbReference type="KEGG" id="bli:BL00340"/>
<dbReference type="eggNOG" id="COG0016">
    <property type="taxonomic scope" value="Bacteria"/>
</dbReference>
<dbReference type="HOGENOM" id="CLU_025086_0_1_9"/>
<dbReference type="Proteomes" id="UP000000606">
    <property type="component" value="Chromosome"/>
</dbReference>
<dbReference type="GO" id="GO:0005737">
    <property type="term" value="C:cytoplasm"/>
    <property type="evidence" value="ECO:0007669"/>
    <property type="project" value="UniProtKB-SubCell"/>
</dbReference>
<dbReference type="GO" id="GO:0005524">
    <property type="term" value="F:ATP binding"/>
    <property type="evidence" value="ECO:0007669"/>
    <property type="project" value="UniProtKB-UniRule"/>
</dbReference>
<dbReference type="GO" id="GO:0140096">
    <property type="term" value="F:catalytic activity, acting on a protein"/>
    <property type="evidence" value="ECO:0007669"/>
    <property type="project" value="UniProtKB-ARBA"/>
</dbReference>
<dbReference type="GO" id="GO:0000287">
    <property type="term" value="F:magnesium ion binding"/>
    <property type="evidence" value="ECO:0007669"/>
    <property type="project" value="UniProtKB-UniRule"/>
</dbReference>
<dbReference type="GO" id="GO:0004826">
    <property type="term" value="F:phenylalanine-tRNA ligase activity"/>
    <property type="evidence" value="ECO:0007669"/>
    <property type="project" value="UniProtKB-UniRule"/>
</dbReference>
<dbReference type="GO" id="GO:0016740">
    <property type="term" value="F:transferase activity"/>
    <property type="evidence" value="ECO:0007669"/>
    <property type="project" value="UniProtKB-ARBA"/>
</dbReference>
<dbReference type="GO" id="GO:0000049">
    <property type="term" value="F:tRNA binding"/>
    <property type="evidence" value="ECO:0007669"/>
    <property type="project" value="InterPro"/>
</dbReference>
<dbReference type="GO" id="GO:0006432">
    <property type="term" value="P:phenylalanyl-tRNA aminoacylation"/>
    <property type="evidence" value="ECO:0007669"/>
    <property type="project" value="UniProtKB-UniRule"/>
</dbReference>
<dbReference type="CDD" id="cd00496">
    <property type="entry name" value="PheRS_alpha_core"/>
    <property type="match status" value="1"/>
</dbReference>
<dbReference type="FunFam" id="3.30.930.10:FF:000003">
    <property type="entry name" value="Phenylalanine--tRNA ligase alpha subunit"/>
    <property type="match status" value="1"/>
</dbReference>
<dbReference type="Gene3D" id="3.30.930.10">
    <property type="entry name" value="Bira Bifunctional Protein, Domain 2"/>
    <property type="match status" value="1"/>
</dbReference>
<dbReference type="HAMAP" id="MF_00281">
    <property type="entry name" value="Phe_tRNA_synth_alpha1"/>
    <property type="match status" value="1"/>
</dbReference>
<dbReference type="InterPro" id="IPR006195">
    <property type="entry name" value="aa-tRNA-synth_II"/>
</dbReference>
<dbReference type="InterPro" id="IPR045864">
    <property type="entry name" value="aa-tRNA-synth_II/BPL/LPL"/>
</dbReference>
<dbReference type="InterPro" id="IPR004529">
    <property type="entry name" value="Phe-tRNA-synth_IIc_asu"/>
</dbReference>
<dbReference type="InterPro" id="IPR004188">
    <property type="entry name" value="Phe-tRNA_ligase_II_N"/>
</dbReference>
<dbReference type="InterPro" id="IPR022911">
    <property type="entry name" value="Phe_tRNA_ligase_alpha1_bac"/>
</dbReference>
<dbReference type="InterPro" id="IPR002319">
    <property type="entry name" value="Phenylalanyl-tRNA_Synthase"/>
</dbReference>
<dbReference type="InterPro" id="IPR010978">
    <property type="entry name" value="tRNA-bd_arm"/>
</dbReference>
<dbReference type="NCBIfam" id="TIGR00468">
    <property type="entry name" value="pheS"/>
    <property type="match status" value="1"/>
</dbReference>
<dbReference type="PANTHER" id="PTHR11538:SF41">
    <property type="entry name" value="PHENYLALANINE--TRNA LIGASE, MITOCHONDRIAL"/>
    <property type="match status" value="1"/>
</dbReference>
<dbReference type="PANTHER" id="PTHR11538">
    <property type="entry name" value="PHENYLALANYL-TRNA SYNTHETASE"/>
    <property type="match status" value="1"/>
</dbReference>
<dbReference type="Pfam" id="PF02912">
    <property type="entry name" value="Phe_tRNA-synt_N"/>
    <property type="match status" value="1"/>
</dbReference>
<dbReference type="Pfam" id="PF01409">
    <property type="entry name" value="tRNA-synt_2d"/>
    <property type="match status" value="1"/>
</dbReference>
<dbReference type="SUPFAM" id="SSF55681">
    <property type="entry name" value="Class II aaRS and biotin synthetases"/>
    <property type="match status" value="1"/>
</dbReference>
<dbReference type="SUPFAM" id="SSF46589">
    <property type="entry name" value="tRNA-binding arm"/>
    <property type="match status" value="1"/>
</dbReference>
<dbReference type="PROSITE" id="PS50862">
    <property type="entry name" value="AA_TRNA_LIGASE_II"/>
    <property type="match status" value="1"/>
</dbReference>
<comment type="catalytic activity">
    <reaction evidence="1">
        <text>tRNA(Phe) + L-phenylalanine + ATP = L-phenylalanyl-tRNA(Phe) + AMP + diphosphate + H(+)</text>
        <dbReference type="Rhea" id="RHEA:19413"/>
        <dbReference type="Rhea" id="RHEA-COMP:9668"/>
        <dbReference type="Rhea" id="RHEA-COMP:9699"/>
        <dbReference type="ChEBI" id="CHEBI:15378"/>
        <dbReference type="ChEBI" id="CHEBI:30616"/>
        <dbReference type="ChEBI" id="CHEBI:33019"/>
        <dbReference type="ChEBI" id="CHEBI:58095"/>
        <dbReference type="ChEBI" id="CHEBI:78442"/>
        <dbReference type="ChEBI" id="CHEBI:78531"/>
        <dbReference type="ChEBI" id="CHEBI:456215"/>
        <dbReference type="EC" id="6.1.1.20"/>
    </reaction>
</comment>
<comment type="cofactor">
    <cofactor evidence="1">
        <name>Mg(2+)</name>
        <dbReference type="ChEBI" id="CHEBI:18420"/>
    </cofactor>
    <text evidence="1">Binds 2 magnesium ions per tetramer.</text>
</comment>
<comment type="subunit">
    <text evidence="1">Tetramer of two alpha and two beta subunits.</text>
</comment>
<comment type="subcellular location">
    <subcellularLocation>
        <location evidence="1">Cytoplasm</location>
    </subcellularLocation>
</comment>
<comment type="similarity">
    <text evidence="1">Belongs to the class-II aminoacyl-tRNA synthetase family. Phe-tRNA synthetase alpha subunit type 1 subfamily.</text>
</comment>
<protein>
    <recommendedName>
        <fullName evidence="1">Phenylalanine--tRNA ligase alpha subunit</fullName>
        <ecNumber evidence="1">6.1.1.20</ecNumber>
    </recommendedName>
    <alternativeName>
        <fullName evidence="1">Phenylalanyl-tRNA synthetase alpha subunit</fullName>
        <shortName evidence="1">PheRS</shortName>
    </alternativeName>
</protein>
<organism>
    <name type="scientific">Bacillus licheniformis (strain ATCC 14580 / DSM 13 / JCM 2505 / CCUG 7422 / NBRC 12200 / NCIMB 9375 / NCTC 10341 / NRRL NRS-1264 / Gibson 46)</name>
    <dbReference type="NCBI Taxonomy" id="279010"/>
    <lineage>
        <taxon>Bacteria</taxon>
        <taxon>Bacillati</taxon>
        <taxon>Bacillota</taxon>
        <taxon>Bacilli</taxon>
        <taxon>Bacillales</taxon>
        <taxon>Bacillaceae</taxon>
        <taxon>Bacillus</taxon>
    </lineage>
</organism>
<keyword id="KW-0030">Aminoacyl-tRNA synthetase</keyword>
<keyword id="KW-0067">ATP-binding</keyword>
<keyword id="KW-0963">Cytoplasm</keyword>
<keyword id="KW-0436">Ligase</keyword>
<keyword id="KW-0460">Magnesium</keyword>
<keyword id="KW-0479">Metal-binding</keyword>
<keyword id="KW-0547">Nucleotide-binding</keyword>
<keyword id="KW-0648">Protein biosynthesis</keyword>
<keyword id="KW-1185">Reference proteome</keyword>
<evidence type="ECO:0000255" key="1">
    <source>
        <dbReference type="HAMAP-Rule" id="MF_00281"/>
    </source>
</evidence>
<accession>Q65GD2</accession>
<accession>Q62RT6</accession>
<name>SYFA_BACLD</name>
<proteinExistence type="inferred from homology"/>
<reference key="1">
    <citation type="journal article" date="2004" name="J. Mol. Microbiol. Biotechnol.">
        <title>The complete genome sequence of Bacillus licheniformis DSM13, an organism with great industrial potential.</title>
        <authorList>
            <person name="Veith B."/>
            <person name="Herzberg C."/>
            <person name="Steckel S."/>
            <person name="Feesche J."/>
            <person name="Maurer K.H."/>
            <person name="Ehrenreich P."/>
            <person name="Baeumer S."/>
            <person name="Henne A."/>
            <person name="Liesegang H."/>
            <person name="Merkl R."/>
            <person name="Ehrenreich A."/>
            <person name="Gottschalk G."/>
        </authorList>
    </citation>
    <scope>NUCLEOTIDE SEQUENCE [LARGE SCALE GENOMIC DNA]</scope>
    <source>
        <strain>ATCC 14580 / DSM 13 / JCM 2505 / CCUG 7422 / NBRC 12200 / NCIMB 9375 / NCTC 10341 / NRRL NRS-1264 / Gibson 46</strain>
    </source>
</reference>
<reference key="2">
    <citation type="journal article" date="2004" name="Genome Biol.">
        <title>Complete genome sequence of the industrial bacterium Bacillus licheniformis and comparisons with closely related Bacillus species.</title>
        <authorList>
            <person name="Rey M.W."/>
            <person name="Ramaiya P."/>
            <person name="Nelson B.A."/>
            <person name="Brody-Karpin S.D."/>
            <person name="Zaretsky E.J."/>
            <person name="Tang M."/>
            <person name="Lopez de Leon A."/>
            <person name="Xiang H."/>
            <person name="Gusti V."/>
            <person name="Clausen I.G."/>
            <person name="Olsen P.B."/>
            <person name="Rasmussen M.D."/>
            <person name="Andersen J.T."/>
            <person name="Joergensen P.L."/>
            <person name="Larsen T.S."/>
            <person name="Sorokin A."/>
            <person name="Bolotin A."/>
            <person name="Lapidus A."/>
            <person name="Galleron N."/>
            <person name="Ehrlich S.D."/>
            <person name="Berka R.M."/>
        </authorList>
    </citation>
    <scope>NUCLEOTIDE SEQUENCE [LARGE SCALE GENOMIC DNA]</scope>
    <source>
        <strain>ATCC 14580 / DSM 13 / JCM 2505 / CCUG 7422 / NBRC 12200 / NCIMB 9375 / NCTC 10341 / NRRL NRS-1264 / Gibson 46</strain>
    </source>
</reference>
<gene>
    <name evidence="1" type="primary">pheS</name>
    <name type="ordered locus">BLi03016</name>
    <name type="ordered locus">BL00340</name>
</gene>
<feature type="chain" id="PRO_0000231962" description="Phenylalanine--tRNA ligase alpha subunit">
    <location>
        <begin position="1"/>
        <end position="344"/>
    </location>
</feature>
<feature type="binding site" evidence="1">
    <location>
        <position position="256"/>
    </location>
    <ligand>
        <name>Mg(2+)</name>
        <dbReference type="ChEBI" id="CHEBI:18420"/>
        <note>shared with beta subunit</note>
    </ligand>
</feature>